<feature type="chain" id="PRO_0000294781" description="Small ribosomal subunit protein uS11">
    <location>
        <begin position="1"/>
        <end position="129"/>
    </location>
</feature>
<name>RS11_LAWIP</name>
<accession>Q1MPP3</accession>
<comment type="function">
    <text evidence="1">Located on the platform of the 30S subunit, it bridges several disparate RNA helices of the 16S rRNA. Forms part of the Shine-Dalgarno cleft in the 70S ribosome.</text>
</comment>
<comment type="subunit">
    <text evidence="1">Part of the 30S ribosomal subunit. Interacts with proteins S7 and S18. Binds to IF-3.</text>
</comment>
<comment type="similarity">
    <text evidence="1">Belongs to the universal ribosomal protein uS11 family.</text>
</comment>
<evidence type="ECO:0000255" key="1">
    <source>
        <dbReference type="HAMAP-Rule" id="MF_01310"/>
    </source>
</evidence>
<evidence type="ECO:0000305" key="2"/>
<keyword id="KW-1185">Reference proteome</keyword>
<keyword id="KW-0687">Ribonucleoprotein</keyword>
<keyword id="KW-0689">Ribosomal protein</keyword>
<keyword id="KW-0694">RNA-binding</keyword>
<keyword id="KW-0699">rRNA-binding</keyword>
<gene>
    <name evidence="1" type="primary">rpsK</name>
    <name type="ordered locus">LI0980</name>
</gene>
<protein>
    <recommendedName>
        <fullName evidence="1">Small ribosomal subunit protein uS11</fullName>
    </recommendedName>
    <alternativeName>
        <fullName evidence="2">30S ribosomal protein S11</fullName>
    </alternativeName>
</protein>
<proteinExistence type="inferred from homology"/>
<dbReference type="EMBL" id="AM180252">
    <property type="protein sequence ID" value="CAJ55034.1"/>
    <property type="molecule type" value="Genomic_DNA"/>
</dbReference>
<dbReference type="RefSeq" id="WP_011527063.1">
    <property type="nucleotide sequence ID" value="NC_008011.1"/>
</dbReference>
<dbReference type="SMR" id="Q1MPP3"/>
<dbReference type="STRING" id="363253.LI0980"/>
<dbReference type="KEGG" id="lip:LI0980"/>
<dbReference type="eggNOG" id="COG0100">
    <property type="taxonomic scope" value="Bacteria"/>
</dbReference>
<dbReference type="HOGENOM" id="CLU_072439_5_0_7"/>
<dbReference type="OrthoDB" id="9806415at2"/>
<dbReference type="Proteomes" id="UP000002430">
    <property type="component" value="Chromosome"/>
</dbReference>
<dbReference type="GO" id="GO:1990904">
    <property type="term" value="C:ribonucleoprotein complex"/>
    <property type="evidence" value="ECO:0007669"/>
    <property type="project" value="UniProtKB-KW"/>
</dbReference>
<dbReference type="GO" id="GO:0005840">
    <property type="term" value="C:ribosome"/>
    <property type="evidence" value="ECO:0007669"/>
    <property type="project" value="UniProtKB-KW"/>
</dbReference>
<dbReference type="GO" id="GO:0019843">
    <property type="term" value="F:rRNA binding"/>
    <property type="evidence" value="ECO:0007669"/>
    <property type="project" value="UniProtKB-UniRule"/>
</dbReference>
<dbReference type="GO" id="GO:0003735">
    <property type="term" value="F:structural constituent of ribosome"/>
    <property type="evidence" value="ECO:0007669"/>
    <property type="project" value="InterPro"/>
</dbReference>
<dbReference type="GO" id="GO:0006412">
    <property type="term" value="P:translation"/>
    <property type="evidence" value="ECO:0007669"/>
    <property type="project" value="UniProtKB-UniRule"/>
</dbReference>
<dbReference type="FunFam" id="3.30.420.80:FF:000001">
    <property type="entry name" value="30S ribosomal protein S11"/>
    <property type="match status" value="1"/>
</dbReference>
<dbReference type="Gene3D" id="3.30.420.80">
    <property type="entry name" value="Ribosomal protein S11"/>
    <property type="match status" value="1"/>
</dbReference>
<dbReference type="HAMAP" id="MF_01310">
    <property type="entry name" value="Ribosomal_uS11"/>
    <property type="match status" value="1"/>
</dbReference>
<dbReference type="InterPro" id="IPR001971">
    <property type="entry name" value="Ribosomal_uS11"/>
</dbReference>
<dbReference type="InterPro" id="IPR019981">
    <property type="entry name" value="Ribosomal_uS11_bac-type"/>
</dbReference>
<dbReference type="InterPro" id="IPR018102">
    <property type="entry name" value="Ribosomal_uS11_CS"/>
</dbReference>
<dbReference type="InterPro" id="IPR036967">
    <property type="entry name" value="Ribosomal_uS11_sf"/>
</dbReference>
<dbReference type="NCBIfam" id="NF003698">
    <property type="entry name" value="PRK05309.1"/>
    <property type="match status" value="1"/>
</dbReference>
<dbReference type="NCBIfam" id="TIGR03632">
    <property type="entry name" value="uS11_bact"/>
    <property type="match status" value="1"/>
</dbReference>
<dbReference type="PANTHER" id="PTHR11759">
    <property type="entry name" value="40S RIBOSOMAL PROTEIN S14/30S RIBOSOMAL PROTEIN S11"/>
    <property type="match status" value="1"/>
</dbReference>
<dbReference type="Pfam" id="PF00411">
    <property type="entry name" value="Ribosomal_S11"/>
    <property type="match status" value="1"/>
</dbReference>
<dbReference type="PIRSF" id="PIRSF002131">
    <property type="entry name" value="Ribosomal_S11"/>
    <property type="match status" value="1"/>
</dbReference>
<dbReference type="SUPFAM" id="SSF53137">
    <property type="entry name" value="Translational machinery components"/>
    <property type="match status" value="1"/>
</dbReference>
<dbReference type="PROSITE" id="PS00054">
    <property type="entry name" value="RIBOSOMAL_S11"/>
    <property type="match status" value="1"/>
</dbReference>
<reference key="1">
    <citation type="submission" date="2005-11" db="EMBL/GenBank/DDBJ databases">
        <title>The complete genome sequence of Lawsonia intracellularis: the causative agent of proliferative enteropathy.</title>
        <authorList>
            <person name="Kaur K."/>
            <person name="Zhang Q."/>
            <person name="Beckler D."/>
            <person name="Munir S."/>
            <person name="Li L."/>
            <person name="Kinsley K."/>
            <person name="Herron L."/>
            <person name="Peterson A."/>
            <person name="May B."/>
            <person name="Singh S."/>
            <person name="Gebhart C."/>
            <person name="Kapur V."/>
        </authorList>
    </citation>
    <scope>NUCLEOTIDE SEQUENCE [LARGE SCALE GENOMIC DNA]</scope>
    <source>
        <strain>PHE/MN1-00</strain>
    </source>
</reference>
<organism>
    <name type="scientific">Lawsonia intracellularis (strain PHE/MN1-00)</name>
    <dbReference type="NCBI Taxonomy" id="363253"/>
    <lineage>
        <taxon>Bacteria</taxon>
        <taxon>Pseudomonadati</taxon>
        <taxon>Thermodesulfobacteriota</taxon>
        <taxon>Desulfovibrionia</taxon>
        <taxon>Desulfovibrionales</taxon>
        <taxon>Desulfovibrionaceae</taxon>
        <taxon>Lawsonia</taxon>
    </lineage>
</organism>
<sequence length="129" mass="14029">MAKPKRIGKKREKKNIPVGVVHIQASFNNTIITFTDPRGNTISWASSGQSGFKGSRKSTPFAAQVAAEQAARRAQDNGMRTVGIYVKGPGSGRESAMRAINAVGFKVAFIRDITPIPHNGCRPPKRRRV</sequence>